<dbReference type="EC" id="3.6.1.-" evidence="13 14 15"/>
<dbReference type="EMBL" id="AF026292">
    <property type="protein sequence ID" value="AAC96011.1"/>
    <property type="molecule type" value="mRNA"/>
</dbReference>
<dbReference type="EMBL" id="CR536511">
    <property type="protein sequence ID" value="CAG38749.1"/>
    <property type="molecule type" value="mRNA"/>
</dbReference>
<dbReference type="EMBL" id="AK291961">
    <property type="protein sequence ID" value="BAF84650.1"/>
    <property type="molecule type" value="mRNA"/>
</dbReference>
<dbReference type="EMBL" id="AK293597">
    <property type="protein sequence ID" value="BAH11543.1"/>
    <property type="molecule type" value="mRNA"/>
</dbReference>
<dbReference type="EMBL" id="AK297846">
    <property type="protein sequence ID" value="BAH12675.1"/>
    <property type="molecule type" value="mRNA"/>
</dbReference>
<dbReference type="EMBL" id="AK298153">
    <property type="protein sequence ID" value="BAH12733.1"/>
    <property type="molecule type" value="mRNA"/>
</dbReference>
<dbReference type="EMBL" id="AC010913">
    <property type="protein sequence ID" value="AAX88902.1"/>
    <property type="molecule type" value="Genomic_DNA"/>
</dbReference>
<dbReference type="EMBL" id="CH471053">
    <property type="protein sequence ID" value="EAW99739.1"/>
    <property type="molecule type" value="Genomic_DNA"/>
</dbReference>
<dbReference type="EMBL" id="CH471053">
    <property type="protein sequence ID" value="EAW99740.1"/>
    <property type="molecule type" value="Genomic_DNA"/>
</dbReference>
<dbReference type="EMBL" id="BC019296">
    <property type="protein sequence ID" value="AAH19296.1"/>
    <property type="molecule type" value="mRNA"/>
</dbReference>
<dbReference type="EMBL" id="BC088351">
    <property type="protein sequence ID" value="AAH88351.1"/>
    <property type="molecule type" value="mRNA"/>
</dbReference>
<dbReference type="EMBL" id="U83843">
    <property type="protein sequence ID" value="AAB41437.1"/>
    <property type="molecule type" value="mRNA"/>
</dbReference>
<dbReference type="CCDS" id="CCDS42696.1">
    <molecule id="Q99832-2"/>
</dbReference>
<dbReference type="CCDS" id="CCDS46336.1">
    <molecule id="Q99832-1"/>
</dbReference>
<dbReference type="CCDS" id="CCDS54366.1">
    <molecule id="Q99832-4"/>
</dbReference>
<dbReference type="CCDS" id="CCDS54367.1">
    <molecule id="Q99832-3"/>
</dbReference>
<dbReference type="RefSeq" id="NP_001009570.1">
    <molecule id="Q99832-2"/>
    <property type="nucleotide sequence ID" value="NM_001009570.3"/>
</dbReference>
<dbReference type="RefSeq" id="NP_001159756.1">
    <molecule id="Q99832-4"/>
    <property type="nucleotide sequence ID" value="NM_001166284.2"/>
</dbReference>
<dbReference type="RefSeq" id="NP_001159757.1">
    <molecule id="Q99832-3"/>
    <property type="nucleotide sequence ID" value="NM_001166285.2"/>
</dbReference>
<dbReference type="RefSeq" id="NP_006420.1">
    <molecule id="Q99832-1"/>
    <property type="nucleotide sequence ID" value="NM_006429.4"/>
</dbReference>
<dbReference type="RefSeq" id="XP_011530780.1">
    <property type="nucleotide sequence ID" value="XM_011532478.2"/>
</dbReference>
<dbReference type="RefSeq" id="XP_011530781.1">
    <property type="nucleotide sequence ID" value="XM_011532479.1"/>
</dbReference>
<dbReference type="RefSeq" id="XP_054196171.1">
    <molecule id="Q99832-3"/>
    <property type="nucleotide sequence ID" value="XM_054340196.1"/>
</dbReference>
<dbReference type="PDB" id="6NR8">
    <property type="method" value="EM"/>
    <property type="resolution" value="7.80 A"/>
    <property type="chains" value="G/O=12-525"/>
</dbReference>
<dbReference type="PDB" id="6NR9">
    <property type="method" value="EM"/>
    <property type="resolution" value="8.50 A"/>
    <property type="chains" value="G/O=12-525"/>
</dbReference>
<dbReference type="PDB" id="6NRA">
    <property type="method" value="EM"/>
    <property type="resolution" value="7.70 A"/>
    <property type="chains" value="G/O=12-525"/>
</dbReference>
<dbReference type="PDB" id="6NRB">
    <property type="method" value="EM"/>
    <property type="resolution" value="8.70 A"/>
    <property type="chains" value="G/O=12-525"/>
</dbReference>
<dbReference type="PDB" id="6NRC">
    <property type="method" value="EM"/>
    <property type="resolution" value="8.30 A"/>
    <property type="chains" value="G/O=12-525"/>
</dbReference>
<dbReference type="PDB" id="6NRD">
    <property type="method" value="EM"/>
    <property type="resolution" value="8.20 A"/>
    <property type="chains" value="G/O=12-525"/>
</dbReference>
<dbReference type="PDB" id="6QB8">
    <property type="method" value="EM"/>
    <property type="resolution" value="3.97 A"/>
    <property type="chains" value="H/h=1-543"/>
</dbReference>
<dbReference type="PDB" id="7LUM">
    <property type="method" value="EM"/>
    <property type="resolution" value="4.50 A"/>
    <property type="chains" value="C/K=1-543"/>
</dbReference>
<dbReference type="PDB" id="7LUP">
    <property type="method" value="EM"/>
    <property type="resolution" value="6.20 A"/>
    <property type="chains" value="C/K=1-543"/>
</dbReference>
<dbReference type="PDB" id="7NVL">
    <property type="method" value="EM"/>
    <property type="resolution" value="2.50 A"/>
    <property type="chains" value="H/h=1-543"/>
</dbReference>
<dbReference type="PDB" id="7NVM">
    <property type="method" value="EM"/>
    <property type="resolution" value="3.10 A"/>
    <property type="chains" value="H/h=1-543"/>
</dbReference>
<dbReference type="PDB" id="7NVN">
    <property type="method" value="EM"/>
    <property type="resolution" value="3.00 A"/>
    <property type="chains" value="H/h=1-543"/>
</dbReference>
<dbReference type="PDB" id="7NVO">
    <property type="method" value="EM"/>
    <property type="resolution" value="3.50 A"/>
    <property type="chains" value="H/h=1-543"/>
</dbReference>
<dbReference type="PDB" id="7TRG">
    <property type="method" value="EM"/>
    <property type="resolution" value="3.00 A"/>
    <property type="chains" value="C=1-542"/>
</dbReference>
<dbReference type="PDB" id="7TTN">
    <property type="method" value="EM"/>
    <property type="resolution" value="3.30 A"/>
    <property type="chains" value="C=1-543"/>
</dbReference>
<dbReference type="PDB" id="7TTT">
    <property type="method" value="EM"/>
    <property type="resolution" value="2.90 A"/>
    <property type="chains" value="C=1-543"/>
</dbReference>
<dbReference type="PDB" id="7TUB">
    <property type="method" value="EM"/>
    <property type="resolution" value="3.60 A"/>
    <property type="chains" value="C=1-543"/>
</dbReference>
<dbReference type="PDB" id="7WU7">
    <property type="method" value="EM"/>
    <property type="resolution" value="3.85 A"/>
    <property type="chains" value="G/O=1-543"/>
</dbReference>
<dbReference type="PDB" id="7WZ3">
    <property type="method" value="EM"/>
    <property type="resolution" value="4.10 A"/>
    <property type="chains" value="H/h=1-543"/>
</dbReference>
<dbReference type="PDB" id="7X0A">
    <property type="method" value="EM"/>
    <property type="resolution" value="3.10 A"/>
    <property type="chains" value="H/h=1-543"/>
</dbReference>
<dbReference type="PDB" id="7X0S">
    <property type="method" value="EM"/>
    <property type="resolution" value="3.10 A"/>
    <property type="chains" value="H/O=1-543"/>
</dbReference>
<dbReference type="PDB" id="7X0V">
    <property type="method" value="EM"/>
    <property type="resolution" value="3.20 A"/>
    <property type="chains" value="H/O=1-543"/>
</dbReference>
<dbReference type="PDB" id="7X3J">
    <property type="method" value="EM"/>
    <property type="resolution" value="4.20 A"/>
    <property type="chains" value="H/h=1-543"/>
</dbReference>
<dbReference type="PDB" id="7X3U">
    <property type="method" value="EM"/>
    <property type="resolution" value="3.30 A"/>
    <property type="chains" value="H/h=1-543"/>
</dbReference>
<dbReference type="PDB" id="7X6Q">
    <property type="method" value="EM"/>
    <property type="resolution" value="4.50 A"/>
    <property type="chains" value="H/O=1-543"/>
</dbReference>
<dbReference type="PDB" id="7X7Y">
    <property type="method" value="EM"/>
    <property type="resolution" value="3.80 A"/>
    <property type="chains" value="H/h=1-543"/>
</dbReference>
<dbReference type="PDB" id="8HKI">
    <property type="method" value="EM"/>
    <property type="resolution" value="3.10 A"/>
    <property type="chains" value="H/h=1-543"/>
</dbReference>
<dbReference type="PDB" id="8I1U">
    <property type="method" value="EM"/>
    <property type="resolution" value="3.24 A"/>
    <property type="chains" value="G/O=1-543"/>
</dbReference>
<dbReference type="PDB" id="8I9U">
    <property type="method" value="EM"/>
    <property type="resolution" value="3.10 A"/>
    <property type="chains" value="G/O=1-543"/>
</dbReference>
<dbReference type="PDB" id="8IB8">
    <property type="method" value="EM"/>
    <property type="resolution" value="4.42 A"/>
    <property type="chains" value="G/O=1-543"/>
</dbReference>
<dbReference type="PDB" id="8SFE">
    <property type="method" value="EM"/>
    <property type="resolution" value="3.36 A"/>
    <property type="chains" value="H/h=1-528"/>
</dbReference>
<dbReference type="PDB" id="8SFF">
    <property type="method" value="EM"/>
    <property type="resolution" value="3.20 A"/>
    <property type="chains" value="H/h=1-528"/>
</dbReference>
<dbReference type="PDB" id="8SG8">
    <property type="method" value="EM"/>
    <property type="resolution" value="3.00 A"/>
    <property type="chains" value="H/h=1-528"/>
</dbReference>
<dbReference type="PDB" id="8SG9">
    <property type="method" value="EM"/>
    <property type="resolution" value="2.90 A"/>
    <property type="chains" value="H/h=1-528"/>
</dbReference>
<dbReference type="PDB" id="8SGC">
    <property type="method" value="EM"/>
    <property type="resolution" value="2.90 A"/>
    <property type="chains" value="H/h=1-528"/>
</dbReference>
<dbReference type="PDB" id="8SGL">
    <property type="method" value="EM"/>
    <property type="resolution" value="2.90 A"/>
    <property type="chains" value="H/h=1-528"/>
</dbReference>
<dbReference type="PDB" id="8SGQ">
    <property type="method" value="EM"/>
    <property type="resolution" value="3.70 A"/>
    <property type="chains" value="H/h=12-525"/>
</dbReference>
<dbReference type="PDB" id="8SH9">
    <property type="method" value="EM"/>
    <property type="resolution" value="2.70 A"/>
    <property type="chains" value="H/h=1-528"/>
</dbReference>
<dbReference type="PDB" id="8SHA">
    <property type="method" value="EM"/>
    <property type="resolution" value="3.00 A"/>
    <property type="chains" value="H/h=1-528"/>
</dbReference>
<dbReference type="PDB" id="8SHD">
    <property type="method" value="EM"/>
    <property type="resolution" value="2.90 A"/>
    <property type="chains" value="H/h=1-528"/>
</dbReference>
<dbReference type="PDB" id="8SHE">
    <property type="method" value="EM"/>
    <property type="resolution" value="2.80 A"/>
    <property type="chains" value="H/h=1-528"/>
</dbReference>
<dbReference type="PDB" id="8SHF">
    <property type="method" value="EM"/>
    <property type="resolution" value="3.00 A"/>
    <property type="chains" value="H/h=1-528"/>
</dbReference>
<dbReference type="PDB" id="8SHG">
    <property type="method" value="EM"/>
    <property type="resolution" value="2.80 A"/>
    <property type="chains" value="H/h=1-528"/>
</dbReference>
<dbReference type="PDB" id="8SHL">
    <property type="method" value="EM"/>
    <property type="resolution" value="3.00 A"/>
    <property type="chains" value="H/h=1-528"/>
</dbReference>
<dbReference type="PDB" id="8SHN">
    <property type="method" value="EM"/>
    <property type="resolution" value="2.80 A"/>
    <property type="chains" value="H/h=1-528"/>
</dbReference>
<dbReference type="PDB" id="8SHO">
    <property type="method" value="EM"/>
    <property type="resolution" value="3.00 A"/>
    <property type="chains" value="H/h=1-528"/>
</dbReference>
<dbReference type="PDB" id="8SHP">
    <property type="method" value="EM"/>
    <property type="resolution" value="3.00 A"/>
    <property type="chains" value="H/h=1-528"/>
</dbReference>
<dbReference type="PDB" id="8SHQ">
    <property type="method" value="EM"/>
    <property type="resolution" value="2.90 A"/>
    <property type="chains" value="H/h=1-528"/>
</dbReference>
<dbReference type="PDB" id="8SHT">
    <property type="method" value="EM"/>
    <property type="resolution" value="3.00 A"/>
    <property type="chains" value="H/h=1-528"/>
</dbReference>
<dbReference type="PDBsum" id="6NR8"/>
<dbReference type="PDBsum" id="6NR9"/>
<dbReference type="PDBsum" id="6NRA"/>
<dbReference type="PDBsum" id="6NRB"/>
<dbReference type="PDBsum" id="6NRC"/>
<dbReference type="PDBsum" id="6NRD"/>
<dbReference type="PDBsum" id="6QB8"/>
<dbReference type="PDBsum" id="7LUM"/>
<dbReference type="PDBsum" id="7LUP"/>
<dbReference type="PDBsum" id="7NVL"/>
<dbReference type="PDBsum" id="7NVM"/>
<dbReference type="PDBsum" id="7NVN"/>
<dbReference type="PDBsum" id="7NVO"/>
<dbReference type="PDBsum" id="7TRG"/>
<dbReference type="PDBsum" id="7TTN"/>
<dbReference type="PDBsum" id="7TTT"/>
<dbReference type="PDBsum" id="7TUB"/>
<dbReference type="PDBsum" id="7WU7"/>
<dbReference type="PDBsum" id="7WZ3"/>
<dbReference type="PDBsum" id="7X0A"/>
<dbReference type="PDBsum" id="7X0S"/>
<dbReference type="PDBsum" id="7X0V"/>
<dbReference type="PDBsum" id="7X3J"/>
<dbReference type="PDBsum" id="7X3U"/>
<dbReference type="PDBsum" id="7X6Q"/>
<dbReference type="PDBsum" id="7X7Y"/>
<dbReference type="PDBsum" id="8HKI"/>
<dbReference type="PDBsum" id="8I1U"/>
<dbReference type="PDBsum" id="8I9U"/>
<dbReference type="PDBsum" id="8IB8"/>
<dbReference type="PDBsum" id="8SFE"/>
<dbReference type="PDBsum" id="8SFF"/>
<dbReference type="PDBsum" id="8SG8"/>
<dbReference type="PDBsum" id="8SG9"/>
<dbReference type="PDBsum" id="8SGC"/>
<dbReference type="PDBsum" id="8SGL"/>
<dbReference type="PDBsum" id="8SGQ"/>
<dbReference type="PDBsum" id="8SH9"/>
<dbReference type="PDBsum" id="8SHA"/>
<dbReference type="PDBsum" id="8SHD"/>
<dbReference type="PDBsum" id="8SHE"/>
<dbReference type="PDBsum" id="8SHF"/>
<dbReference type="PDBsum" id="8SHG"/>
<dbReference type="PDBsum" id="8SHL"/>
<dbReference type="PDBsum" id="8SHN"/>
<dbReference type="PDBsum" id="8SHO"/>
<dbReference type="PDBsum" id="8SHP"/>
<dbReference type="PDBsum" id="8SHQ"/>
<dbReference type="PDBsum" id="8SHT"/>
<dbReference type="EMDB" id="EMD-0490"/>
<dbReference type="EMDB" id="EMD-0491"/>
<dbReference type="EMDB" id="EMD-0492"/>
<dbReference type="EMDB" id="EMD-0493"/>
<dbReference type="EMDB" id="EMD-0494"/>
<dbReference type="EMDB" id="EMD-0495"/>
<dbReference type="EMDB" id="EMD-12605"/>
<dbReference type="EMDB" id="EMD-12606"/>
<dbReference type="EMDB" id="EMD-12607"/>
<dbReference type="EMDB" id="EMD-12608"/>
<dbReference type="EMDB" id="EMD-13754"/>
<dbReference type="EMDB" id="EMD-23522"/>
<dbReference type="EMDB" id="EMD-23526"/>
<dbReference type="EMDB" id="EMD-26089"/>
<dbReference type="EMDB" id="EMD-26120"/>
<dbReference type="EMDB" id="EMD-26123"/>
<dbReference type="EMDB" id="EMD-26131"/>
<dbReference type="EMDB" id="EMD-32823"/>
<dbReference type="EMDB" id="EMD-32903"/>
<dbReference type="EMDB" id="EMD-32922"/>
<dbReference type="EMDB" id="EMD-32923"/>
<dbReference type="EMDB" id="EMD-32926"/>
<dbReference type="EMDB" id="EMD-32989"/>
<dbReference type="EMDB" id="EMD-32993"/>
<dbReference type="EMDB" id="EMD-33025"/>
<dbReference type="EMDB" id="EMD-33053"/>
<dbReference type="EMDB" id="EMD-34852"/>
<dbReference type="EMDB" id="EMD-35122"/>
<dbReference type="EMDB" id="EMD-35284"/>
<dbReference type="EMDB" id="EMD-35335"/>
<dbReference type="EMDB" id="EMD-40439"/>
<dbReference type="EMDB" id="EMD-40440"/>
<dbReference type="EMDB" id="EMD-40452"/>
<dbReference type="EMDB" id="EMD-40453"/>
<dbReference type="EMDB" id="EMD-40454"/>
<dbReference type="EMDB" id="EMD-40461"/>
<dbReference type="EMDB" id="EMD-40464"/>
<dbReference type="EMDB" id="EMD-40481"/>
<dbReference type="EMDB" id="EMD-40482"/>
<dbReference type="EMDB" id="EMD-40484"/>
<dbReference type="EMDB" id="EMD-40485"/>
<dbReference type="EMDB" id="EMD-40486"/>
<dbReference type="EMDB" id="EMD-40487"/>
<dbReference type="EMDB" id="EMD-40488"/>
<dbReference type="EMDB" id="EMD-40489"/>
<dbReference type="EMDB" id="EMD-40490"/>
<dbReference type="EMDB" id="EMD-40491"/>
<dbReference type="EMDB" id="EMD-40492"/>
<dbReference type="EMDB" id="EMD-40494"/>
<dbReference type="EMDB" id="EMD-4489"/>
<dbReference type="SMR" id="Q99832"/>
<dbReference type="BioGRID" id="115825">
    <property type="interactions" value="626"/>
</dbReference>
<dbReference type="ComplexPortal" id="CPX-6030">
    <property type="entry name" value="Chaperonin-containing T-complex"/>
</dbReference>
<dbReference type="CORUM" id="Q99832"/>
<dbReference type="DIP" id="DIP-51608N"/>
<dbReference type="FunCoup" id="Q99832">
    <property type="interactions" value="4148"/>
</dbReference>
<dbReference type="IntAct" id="Q99832">
    <property type="interactions" value="364"/>
</dbReference>
<dbReference type="MINT" id="Q99832"/>
<dbReference type="STRING" id="9606.ENSP00000258091"/>
<dbReference type="GlyGen" id="Q99832">
    <property type="glycosylation" value="1 site, 1 O-linked glycan (1 site)"/>
</dbReference>
<dbReference type="iPTMnet" id="Q99832"/>
<dbReference type="MetOSite" id="Q99832"/>
<dbReference type="PhosphoSitePlus" id="Q99832"/>
<dbReference type="SwissPalm" id="Q99832"/>
<dbReference type="BioMuta" id="CCT7"/>
<dbReference type="DMDM" id="3041738"/>
<dbReference type="REPRODUCTION-2DPAGE" id="IPI00018465"/>
<dbReference type="CPTAC" id="CPTAC-181"/>
<dbReference type="jPOST" id="Q99832"/>
<dbReference type="MassIVE" id="Q99832"/>
<dbReference type="PaxDb" id="9606-ENSP00000258091"/>
<dbReference type="PeptideAtlas" id="Q99832"/>
<dbReference type="PRIDE" id="Q99832"/>
<dbReference type="ProteomicsDB" id="78495">
    <molecule id="Q99832-1"/>
</dbReference>
<dbReference type="ProteomicsDB" id="78496">
    <molecule id="Q99832-2"/>
</dbReference>
<dbReference type="ProteomicsDB" id="78497">
    <molecule id="Q99832-3"/>
</dbReference>
<dbReference type="ProteomicsDB" id="78498">
    <molecule id="Q99832-4"/>
</dbReference>
<dbReference type="Pumba" id="Q99832"/>
<dbReference type="Antibodypedia" id="1382">
    <property type="antibodies" value="282 antibodies from 31 providers"/>
</dbReference>
<dbReference type="DNASU" id="10574"/>
<dbReference type="Ensembl" id="ENST00000258091.10">
    <molecule id="Q99832-1"/>
    <property type="protein sequence ID" value="ENSP00000258091.5"/>
    <property type="gene ID" value="ENSG00000135624.17"/>
</dbReference>
<dbReference type="Ensembl" id="ENST00000398422.2">
    <molecule id="Q99832-2"/>
    <property type="protein sequence ID" value="ENSP00000381456.2"/>
    <property type="gene ID" value="ENSG00000135624.17"/>
</dbReference>
<dbReference type="Ensembl" id="ENST00000539919.5">
    <molecule id="Q99832-3"/>
    <property type="protein sequence ID" value="ENSP00000437824.1"/>
    <property type="gene ID" value="ENSG00000135624.17"/>
</dbReference>
<dbReference type="Ensembl" id="ENST00000540468.5">
    <molecule id="Q99832-4"/>
    <property type="protein sequence ID" value="ENSP00000442058.1"/>
    <property type="gene ID" value="ENSG00000135624.17"/>
</dbReference>
<dbReference type="GeneID" id="10574"/>
<dbReference type="KEGG" id="hsa:10574"/>
<dbReference type="MANE-Select" id="ENST00000258091.10">
    <property type="protein sequence ID" value="ENSP00000258091.5"/>
    <property type="RefSeq nucleotide sequence ID" value="NM_006429.4"/>
    <property type="RefSeq protein sequence ID" value="NP_006420.1"/>
</dbReference>
<dbReference type="UCSC" id="uc002siz.4">
    <molecule id="Q99832-1"/>
    <property type="organism name" value="human"/>
</dbReference>
<dbReference type="AGR" id="HGNC:1622"/>
<dbReference type="CTD" id="10574"/>
<dbReference type="DisGeNET" id="10574"/>
<dbReference type="GeneCards" id="CCT7"/>
<dbReference type="HGNC" id="HGNC:1622">
    <property type="gene designation" value="CCT7"/>
</dbReference>
<dbReference type="HPA" id="ENSG00000135624">
    <property type="expression patterns" value="Low tissue specificity"/>
</dbReference>
<dbReference type="MalaCards" id="CCT7"/>
<dbReference type="MIM" id="605140">
    <property type="type" value="gene"/>
</dbReference>
<dbReference type="neXtProt" id="NX_Q99832"/>
<dbReference type="OpenTargets" id="ENSG00000135624"/>
<dbReference type="PharmGKB" id="PA26185"/>
<dbReference type="VEuPathDB" id="HostDB:ENSG00000135624"/>
<dbReference type="eggNOG" id="KOG0361">
    <property type="taxonomic scope" value="Eukaryota"/>
</dbReference>
<dbReference type="GeneTree" id="ENSGT00550000074832"/>
<dbReference type="HOGENOM" id="CLU_008891_7_1_1"/>
<dbReference type="InParanoid" id="Q99832"/>
<dbReference type="OMA" id="HRKGNTW"/>
<dbReference type="OrthoDB" id="1935484at2759"/>
<dbReference type="PAN-GO" id="Q99832">
    <property type="GO annotations" value="3 GO annotations based on evolutionary models"/>
</dbReference>
<dbReference type="PhylomeDB" id="Q99832"/>
<dbReference type="TreeFam" id="TF105641"/>
<dbReference type="BRENDA" id="3.6.4.B10">
    <property type="organism ID" value="2681"/>
</dbReference>
<dbReference type="PathwayCommons" id="Q99832"/>
<dbReference type="Reactome" id="R-HSA-389957">
    <property type="pathway name" value="Prefoldin mediated transfer of substrate to CCT/TriC"/>
</dbReference>
<dbReference type="Reactome" id="R-HSA-389960">
    <property type="pathway name" value="Formation of tubulin folding intermediates by CCT/TriC"/>
</dbReference>
<dbReference type="Reactome" id="R-HSA-390450">
    <property type="pathway name" value="Folding of actin by CCT/TriC"/>
</dbReference>
<dbReference type="Reactome" id="R-HSA-390471">
    <property type="pathway name" value="Association of TriC/CCT with target proteins during biosynthesis"/>
</dbReference>
<dbReference type="Reactome" id="R-HSA-6814122">
    <property type="pathway name" value="Cooperation of PDCL (PhLP1) and TRiC/CCT in G-protein beta folding"/>
</dbReference>
<dbReference type="Reactome" id="R-HSA-9013418">
    <property type="pathway name" value="RHOBTB2 GTPase cycle"/>
</dbReference>
<dbReference type="Reactome" id="R-HSA-9013422">
    <property type="pathway name" value="RHOBTB1 GTPase cycle"/>
</dbReference>
<dbReference type="SignaLink" id="Q99832"/>
<dbReference type="SIGNOR" id="Q99832"/>
<dbReference type="BioGRID-ORCS" id="10574">
    <property type="hits" value="646 hits in 1153 CRISPR screens"/>
</dbReference>
<dbReference type="CD-CODE" id="91857CE7">
    <property type="entry name" value="Nucleolus"/>
</dbReference>
<dbReference type="CD-CODE" id="FB4E32DD">
    <property type="entry name" value="Presynaptic clusters and postsynaptic densities"/>
</dbReference>
<dbReference type="ChiTaRS" id="CCT7">
    <property type="organism name" value="human"/>
</dbReference>
<dbReference type="GeneWiki" id="CCT7"/>
<dbReference type="GenomeRNAi" id="10574"/>
<dbReference type="Pharos" id="Q99832">
    <property type="development level" value="Tbio"/>
</dbReference>
<dbReference type="PRO" id="PR:Q99832"/>
<dbReference type="Proteomes" id="UP000005640">
    <property type="component" value="Chromosome 2"/>
</dbReference>
<dbReference type="RNAct" id="Q99832">
    <property type="molecule type" value="protein"/>
</dbReference>
<dbReference type="Bgee" id="ENSG00000135624">
    <property type="expression patterns" value="Expressed in ganglionic eminence and 210 other cell types or tissues"/>
</dbReference>
<dbReference type="ExpressionAtlas" id="Q99832">
    <property type="expression patterns" value="baseline and differential"/>
</dbReference>
<dbReference type="GO" id="GO:0044297">
    <property type="term" value="C:cell body"/>
    <property type="evidence" value="ECO:0007669"/>
    <property type="project" value="Ensembl"/>
</dbReference>
<dbReference type="GO" id="GO:0005832">
    <property type="term" value="C:chaperonin-containing T-complex"/>
    <property type="evidence" value="ECO:0000314"/>
    <property type="project" value="UniProtKB"/>
</dbReference>
<dbReference type="GO" id="GO:0005737">
    <property type="term" value="C:cytoplasm"/>
    <property type="evidence" value="ECO:0000304"/>
    <property type="project" value="ProtInc"/>
</dbReference>
<dbReference type="GO" id="GO:0005829">
    <property type="term" value="C:cytosol"/>
    <property type="evidence" value="ECO:0000304"/>
    <property type="project" value="Reactome"/>
</dbReference>
<dbReference type="GO" id="GO:0070062">
    <property type="term" value="C:extracellular exosome"/>
    <property type="evidence" value="ECO:0007005"/>
    <property type="project" value="UniProtKB"/>
</dbReference>
<dbReference type="GO" id="GO:0005874">
    <property type="term" value="C:microtubule"/>
    <property type="evidence" value="ECO:0000314"/>
    <property type="project" value="UniProtKB"/>
</dbReference>
<dbReference type="GO" id="GO:0005524">
    <property type="term" value="F:ATP binding"/>
    <property type="evidence" value="ECO:0007669"/>
    <property type="project" value="UniProtKB-KW"/>
</dbReference>
<dbReference type="GO" id="GO:0016887">
    <property type="term" value="F:ATP hydrolysis activity"/>
    <property type="evidence" value="ECO:0007669"/>
    <property type="project" value="InterPro"/>
</dbReference>
<dbReference type="GO" id="GO:0140662">
    <property type="term" value="F:ATP-dependent protein folding chaperone"/>
    <property type="evidence" value="ECO:0007669"/>
    <property type="project" value="InterPro"/>
</dbReference>
<dbReference type="GO" id="GO:0042802">
    <property type="term" value="F:identical protein binding"/>
    <property type="evidence" value="ECO:0007669"/>
    <property type="project" value="Ensembl"/>
</dbReference>
<dbReference type="GO" id="GO:0044183">
    <property type="term" value="F:protein folding chaperone"/>
    <property type="evidence" value="ECO:0000314"/>
    <property type="project" value="BHF-UCL"/>
</dbReference>
<dbReference type="GO" id="GO:0051082">
    <property type="term" value="F:unfolded protein binding"/>
    <property type="evidence" value="ECO:0000318"/>
    <property type="project" value="GO_Central"/>
</dbReference>
<dbReference type="GO" id="GO:0007339">
    <property type="term" value="P:binding of sperm to zona pellucida"/>
    <property type="evidence" value="ECO:0007669"/>
    <property type="project" value="Ensembl"/>
</dbReference>
<dbReference type="GO" id="GO:0051086">
    <property type="term" value="P:chaperone mediated protein folding independent of cofactor"/>
    <property type="evidence" value="ECO:0000315"/>
    <property type="project" value="BHF-UCL"/>
</dbReference>
<dbReference type="GO" id="GO:0061077">
    <property type="term" value="P:chaperone-mediated protein folding"/>
    <property type="evidence" value="ECO:0000314"/>
    <property type="project" value="ComplexPortal"/>
</dbReference>
<dbReference type="GO" id="GO:1904871">
    <property type="term" value="P:positive regulation of protein localization to Cajal body"/>
    <property type="evidence" value="ECO:0007001"/>
    <property type="project" value="BHF-UCL"/>
</dbReference>
<dbReference type="GO" id="GO:1904874">
    <property type="term" value="P:positive regulation of telomerase RNA localization to Cajal body"/>
    <property type="evidence" value="ECO:0007001"/>
    <property type="project" value="BHF-UCL"/>
</dbReference>
<dbReference type="GO" id="GO:0032212">
    <property type="term" value="P:positive regulation of telomere maintenance via telomerase"/>
    <property type="evidence" value="ECO:0000315"/>
    <property type="project" value="BHF-UCL"/>
</dbReference>
<dbReference type="GO" id="GO:0006457">
    <property type="term" value="P:protein folding"/>
    <property type="evidence" value="ECO:0000314"/>
    <property type="project" value="FlyBase"/>
</dbReference>
<dbReference type="GO" id="GO:0050821">
    <property type="term" value="P:protein stabilization"/>
    <property type="evidence" value="ECO:0000315"/>
    <property type="project" value="BHF-UCL"/>
</dbReference>
<dbReference type="CDD" id="cd03340">
    <property type="entry name" value="TCP1_eta"/>
    <property type="match status" value="1"/>
</dbReference>
<dbReference type="FunFam" id="1.10.560.10:FF:000017">
    <property type="entry name" value="T-complex protein 1 subunit eta"/>
    <property type="match status" value="1"/>
</dbReference>
<dbReference type="FunFam" id="1.10.560.10:FF:000045">
    <property type="entry name" value="T-complex protein 1 subunit eta"/>
    <property type="match status" value="1"/>
</dbReference>
<dbReference type="FunFam" id="3.30.260.10:FF:000022">
    <property type="entry name" value="T-complex protein 1 subunit eta"/>
    <property type="match status" value="1"/>
</dbReference>
<dbReference type="FunFam" id="3.30.260.10:FF:000049">
    <property type="entry name" value="T-complex protein 1 subunit eta"/>
    <property type="match status" value="1"/>
</dbReference>
<dbReference type="FunFam" id="3.50.7.10:FF:000006">
    <property type="entry name" value="T-complex protein 1 subunit eta"/>
    <property type="match status" value="1"/>
</dbReference>
<dbReference type="Gene3D" id="3.50.7.10">
    <property type="entry name" value="GroEL"/>
    <property type="match status" value="1"/>
</dbReference>
<dbReference type="Gene3D" id="1.10.560.10">
    <property type="entry name" value="GroEL-like equatorial domain"/>
    <property type="match status" value="1"/>
</dbReference>
<dbReference type="Gene3D" id="3.30.260.10">
    <property type="entry name" value="TCP-1-like chaperonin intermediate domain"/>
    <property type="match status" value="1"/>
</dbReference>
<dbReference type="InterPro" id="IPR012720">
    <property type="entry name" value="Chap_CCT_eta"/>
</dbReference>
<dbReference type="InterPro" id="IPR017998">
    <property type="entry name" value="Chaperone_TCP-1"/>
</dbReference>
<dbReference type="InterPro" id="IPR002194">
    <property type="entry name" value="Chaperonin_TCP-1_CS"/>
</dbReference>
<dbReference type="InterPro" id="IPR002423">
    <property type="entry name" value="Cpn60/GroEL/TCP-1"/>
</dbReference>
<dbReference type="InterPro" id="IPR027409">
    <property type="entry name" value="GroEL-like_apical_dom_sf"/>
</dbReference>
<dbReference type="InterPro" id="IPR027413">
    <property type="entry name" value="GROEL-like_equatorial_sf"/>
</dbReference>
<dbReference type="InterPro" id="IPR027410">
    <property type="entry name" value="TCP-1-like_intermed_sf"/>
</dbReference>
<dbReference type="InterPro" id="IPR053374">
    <property type="entry name" value="TCP-1_chaperonin"/>
</dbReference>
<dbReference type="InterPro" id="IPR054827">
    <property type="entry name" value="thermosome_alpha"/>
</dbReference>
<dbReference type="NCBIfam" id="TIGR02345">
    <property type="entry name" value="chap_CCT_eta"/>
    <property type="match status" value="1"/>
</dbReference>
<dbReference type="NCBIfam" id="NF041082">
    <property type="entry name" value="thermosome_alpha"/>
    <property type="match status" value="1"/>
</dbReference>
<dbReference type="NCBIfam" id="NF041083">
    <property type="entry name" value="thermosome_beta"/>
    <property type="match status" value="1"/>
</dbReference>
<dbReference type="PANTHER" id="PTHR11353">
    <property type="entry name" value="CHAPERONIN"/>
    <property type="match status" value="1"/>
</dbReference>
<dbReference type="Pfam" id="PF00118">
    <property type="entry name" value="Cpn60_TCP1"/>
    <property type="match status" value="1"/>
</dbReference>
<dbReference type="PRINTS" id="PR00304">
    <property type="entry name" value="TCOMPLEXTCP1"/>
</dbReference>
<dbReference type="SUPFAM" id="SSF52029">
    <property type="entry name" value="GroEL apical domain-like"/>
    <property type="match status" value="1"/>
</dbReference>
<dbReference type="SUPFAM" id="SSF48592">
    <property type="entry name" value="GroEL equatorial domain-like"/>
    <property type="match status" value="1"/>
</dbReference>
<dbReference type="SUPFAM" id="SSF54849">
    <property type="entry name" value="GroEL-intermediate domain like"/>
    <property type="match status" value="1"/>
</dbReference>
<dbReference type="PROSITE" id="PS00750">
    <property type="entry name" value="TCP1_1"/>
    <property type="match status" value="1"/>
</dbReference>
<dbReference type="PROSITE" id="PS00751">
    <property type="entry name" value="TCP1_2"/>
    <property type="match status" value="1"/>
</dbReference>
<dbReference type="PROSITE" id="PS00995">
    <property type="entry name" value="TCP1_3"/>
    <property type="match status" value="1"/>
</dbReference>
<gene>
    <name type="primary">CCT7</name>
    <name type="synonym">CCTH</name>
    <name type="synonym">NIP7-1</name>
</gene>
<comment type="function">
    <text evidence="4 6 7 8">Component of the chaperonin-containing T-complex (TRiC), a molecular chaperone complex that assists the folding of actin, tubulin and other proteins upon ATP hydrolysis (PubMed:25467444, PubMed:36493755, PubMed:35449234, PubMed:37193829). The TRiC complex mediates the folding of WRAP53/TCAB1, thereby regulating telomere maintenance (PubMed:25467444).</text>
</comment>
<comment type="catalytic activity">
    <reaction evidence="13 14 15">
        <text>ATP + H2O = ADP + phosphate + H(+)</text>
        <dbReference type="Rhea" id="RHEA:13065"/>
        <dbReference type="ChEBI" id="CHEBI:15377"/>
        <dbReference type="ChEBI" id="CHEBI:15378"/>
        <dbReference type="ChEBI" id="CHEBI:30616"/>
        <dbReference type="ChEBI" id="CHEBI:43474"/>
        <dbReference type="ChEBI" id="CHEBI:456216"/>
    </reaction>
</comment>
<comment type="subunit">
    <text evidence="3 4 5 6 7 8">Component of the chaperonin-containing T-complex (TRiC), a hexadecamer composed of two identical back-to-back stacked rings enclosing a protein folding chamber (PubMed:25467444, PubMed:36493755, PubMed:35449234, PubMed:37193829). Each ring is made up of eight different subunits: TCP1/CCT1, CCT2, CCT3, CCT4, CCT5, CCT6A/CCT6, CCT7, CCT8 (PubMed:36493755, PubMed:35449234, PubMed:37193829). Interacts with PACRG (PubMed:14532270). Interacts with DLEC1 (PubMed:33144677).</text>
</comment>
<comment type="interaction">
    <interactant intactId="EBI-357046">
        <id>Q99832</id>
    </interactant>
    <interactant intactId="EBI-357407">
        <id>P78371</id>
        <label>CCT2</label>
    </interactant>
    <organismsDiffer>false</organismsDiffer>
    <experiments>7</experiments>
</comment>
<comment type="interaction">
    <interactant intactId="EBI-357046">
        <id>Q99832</id>
    </interactant>
    <interactant intactId="EBI-372173">
        <id>O77932</id>
        <label>DXO</label>
    </interactant>
    <organismsDiffer>false</organismsDiffer>
    <experiments>3</experiments>
</comment>
<comment type="interaction">
    <interactant intactId="EBI-357046">
        <id>Q99832</id>
    </interactant>
    <interactant intactId="EBI-3930567">
        <id>Q02575</id>
        <label>NHLH1</label>
    </interactant>
    <organismsDiffer>false</organismsDiffer>
    <experiments>3</experiments>
</comment>
<comment type="interaction">
    <interactant intactId="EBI-357046">
        <id>Q99832</id>
    </interactant>
    <interactant intactId="EBI-2802743">
        <id>Q6PHZ7</id>
        <label>NR2C2</label>
    </interactant>
    <organismsDiffer>false</organismsDiffer>
    <experiments>3</experiments>
</comment>
<comment type="interaction">
    <interactant intactId="EBI-357046">
        <id>Q99832</id>
    </interactant>
    <interactant intactId="EBI-2557276">
        <id>O15534</id>
        <label>PER1</label>
    </interactant>
    <organismsDiffer>false</organismsDiffer>
    <experiments>3</experiments>
</comment>
<comment type="interaction">
    <interactant intactId="EBI-357046">
        <id>Q99832</id>
    </interactant>
    <interactant intactId="EBI-727055">
        <id>Q969T9</id>
        <label>WBP2</label>
    </interactant>
    <organismsDiffer>false</organismsDiffer>
    <experiments>3</experiments>
</comment>
<comment type="interaction">
    <interactant intactId="EBI-357046">
        <id>Q99832</id>
    </interactant>
    <interactant intactId="EBI-744560">
        <id>Q64LD2</id>
        <label>WDR25</label>
    </interactant>
    <organismsDiffer>false</organismsDiffer>
    <experiments>2</experiments>
</comment>
<comment type="interaction">
    <interactant intactId="EBI-357046">
        <id>Q99832</id>
    </interactant>
    <interactant intactId="EBI-16435478">
        <id>Q9BYN7-2</id>
        <label>ZNF341</label>
    </interactant>
    <organismsDiffer>false</organismsDiffer>
    <experiments>3</experiments>
</comment>
<comment type="interaction">
    <interactant intactId="EBI-357046">
        <id>Q99832</id>
    </interactant>
    <interactant intactId="EBI-741415">
        <id>O60232</id>
        <label>ZNRD2</label>
    </interactant>
    <organismsDiffer>false</organismsDiffer>
    <experiments>8</experiments>
</comment>
<comment type="subcellular location">
    <subcellularLocation>
        <location evidence="1">Cytoplasm</location>
    </subcellularLocation>
</comment>
<comment type="alternative products">
    <event type="alternative splicing"/>
    <isoform>
        <id>Q99832-1</id>
        <name>1</name>
        <sequence type="displayed"/>
    </isoform>
    <isoform>
        <id>Q99832-2</id>
        <name>2</name>
        <sequence type="described" ref="VSP_043573 VSP_043574"/>
    </isoform>
    <isoform>
        <id>Q99832-3</id>
        <name>3</name>
        <sequence type="described" ref="VSP_043572"/>
    </isoform>
    <isoform>
        <id>Q99832-4</id>
        <name>4</name>
        <sequence type="described" ref="VSP_043573"/>
    </isoform>
</comment>
<comment type="disease">
    <text evidence="9">De novo genetic variants in nearly every subunit of the TRiC complex, including CCT7, have been found in individuals with a broad spectrum of brain malformations, and clinical phenotypes ranging from mild to severe epilepsy, developmental delay, intellectual disability, ataxia, and other features of cerebral malfunction.</text>
</comment>
<comment type="similarity">
    <text evidence="12">Belongs to the TCP-1 chaperonin family.</text>
</comment>
<accession>Q99832</accession>
<accession>A8K7E6</accession>
<accession>A8MWI8</accession>
<accession>B7WNW9</accession>
<accession>B7Z4T9</accession>
<accession>B7Z4Z7</accession>
<accession>O14871</accession>
<accession>Q6FI26</accession>
<name>TCPH_HUMAN</name>
<keyword id="KW-0002">3D-structure</keyword>
<keyword id="KW-0007">Acetylation</keyword>
<keyword id="KW-0025">Alternative splicing</keyword>
<keyword id="KW-0067">ATP-binding</keyword>
<keyword id="KW-0143">Chaperone</keyword>
<keyword id="KW-0963">Cytoplasm</keyword>
<keyword id="KW-0903">Direct protein sequencing</keyword>
<keyword id="KW-0378">Hydrolase</keyword>
<keyword id="KW-1017">Isopeptide bond</keyword>
<keyword id="KW-0488">Methylation</keyword>
<keyword id="KW-0547">Nucleotide-binding</keyword>
<keyword id="KW-1267">Proteomics identification</keyword>
<keyword id="KW-1185">Reference proteome</keyword>
<keyword id="KW-0832">Ubl conjugation</keyword>
<reference key="1">
    <citation type="journal article" date="1998" name="Mol. Cell. Biol.">
        <title>Maturation of human cyclin E requires the function of eukaryotic chaperonin CCT.</title>
        <authorList>
            <person name="Won K.-A."/>
            <person name="Schumacher R.J."/>
            <person name="Farr G.W."/>
            <person name="Horwich A.L."/>
            <person name="Reed S.I."/>
        </authorList>
    </citation>
    <scope>NUCLEOTIDE SEQUENCE [MRNA] (ISOFORM 1)</scope>
</reference>
<reference key="2">
    <citation type="submission" date="2004-06" db="EMBL/GenBank/DDBJ databases">
        <title>Cloning of human full open reading frames in Gateway(TM) system entry vector (pDONR201).</title>
        <authorList>
            <person name="Halleck A."/>
            <person name="Ebert L."/>
            <person name="Mkoundinya M."/>
            <person name="Schick M."/>
            <person name="Eisenstein S."/>
            <person name="Neubert P."/>
            <person name="Kstrang K."/>
            <person name="Schatten R."/>
            <person name="Shen B."/>
            <person name="Henze S."/>
            <person name="Mar W."/>
            <person name="Korn B."/>
            <person name="Zuo D."/>
            <person name="Hu Y."/>
            <person name="LaBaer J."/>
        </authorList>
    </citation>
    <scope>NUCLEOTIDE SEQUENCE [LARGE SCALE MRNA] (ISOFORM 1)</scope>
</reference>
<reference key="3">
    <citation type="journal article" date="2004" name="Nat. Genet.">
        <title>Complete sequencing and characterization of 21,243 full-length human cDNAs.</title>
        <authorList>
            <person name="Ota T."/>
            <person name="Suzuki Y."/>
            <person name="Nishikawa T."/>
            <person name="Otsuki T."/>
            <person name="Sugiyama T."/>
            <person name="Irie R."/>
            <person name="Wakamatsu A."/>
            <person name="Hayashi K."/>
            <person name="Sato H."/>
            <person name="Nagai K."/>
            <person name="Kimura K."/>
            <person name="Makita H."/>
            <person name="Sekine M."/>
            <person name="Obayashi M."/>
            <person name="Nishi T."/>
            <person name="Shibahara T."/>
            <person name="Tanaka T."/>
            <person name="Ishii S."/>
            <person name="Yamamoto J."/>
            <person name="Saito K."/>
            <person name="Kawai Y."/>
            <person name="Isono Y."/>
            <person name="Nakamura Y."/>
            <person name="Nagahari K."/>
            <person name="Murakami K."/>
            <person name="Yasuda T."/>
            <person name="Iwayanagi T."/>
            <person name="Wagatsuma M."/>
            <person name="Shiratori A."/>
            <person name="Sudo H."/>
            <person name="Hosoiri T."/>
            <person name="Kaku Y."/>
            <person name="Kodaira H."/>
            <person name="Kondo H."/>
            <person name="Sugawara M."/>
            <person name="Takahashi M."/>
            <person name="Kanda K."/>
            <person name="Yokoi T."/>
            <person name="Furuya T."/>
            <person name="Kikkawa E."/>
            <person name="Omura Y."/>
            <person name="Abe K."/>
            <person name="Kamihara K."/>
            <person name="Katsuta N."/>
            <person name="Sato K."/>
            <person name="Tanikawa M."/>
            <person name="Yamazaki M."/>
            <person name="Ninomiya K."/>
            <person name="Ishibashi T."/>
            <person name="Yamashita H."/>
            <person name="Murakawa K."/>
            <person name="Fujimori K."/>
            <person name="Tanai H."/>
            <person name="Kimata M."/>
            <person name="Watanabe M."/>
            <person name="Hiraoka S."/>
            <person name="Chiba Y."/>
            <person name="Ishida S."/>
            <person name="Ono Y."/>
            <person name="Takiguchi S."/>
            <person name="Watanabe S."/>
            <person name="Yosida M."/>
            <person name="Hotuta T."/>
            <person name="Kusano J."/>
            <person name="Kanehori K."/>
            <person name="Takahashi-Fujii A."/>
            <person name="Hara H."/>
            <person name="Tanase T.-O."/>
            <person name="Nomura Y."/>
            <person name="Togiya S."/>
            <person name="Komai F."/>
            <person name="Hara R."/>
            <person name="Takeuchi K."/>
            <person name="Arita M."/>
            <person name="Imose N."/>
            <person name="Musashino K."/>
            <person name="Yuuki H."/>
            <person name="Oshima A."/>
            <person name="Sasaki N."/>
            <person name="Aotsuka S."/>
            <person name="Yoshikawa Y."/>
            <person name="Matsunawa H."/>
            <person name="Ichihara T."/>
            <person name="Shiohata N."/>
            <person name="Sano S."/>
            <person name="Moriya S."/>
            <person name="Momiyama H."/>
            <person name="Satoh N."/>
            <person name="Takami S."/>
            <person name="Terashima Y."/>
            <person name="Suzuki O."/>
            <person name="Nakagawa S."/>
            <person name="Senoh A."/>
            <person name="Mizoguchi H."/>
            <person name="Goto Y."/>
            <person name="Shimizu F."/>
            <person name="Wakebe H."/>
            <person name="Hishigaki H."/>
            <person name="Watanabe T."/>
            <person name="Sugiyama A."/>
            <person name="Takemoto M."/>
            <person name="Kawakami B."/>
            <person name="Yamazaki M."/>
            <person name="Watanabe K."/>
            <person name="Kumagai A."/>
            <person name="Itakura S."/>
            <person name="Fukuzumi Y."/>
            <person name="Fujimori Y."/>
            <person name="Komiyama M."/>
            <person name="Tashiro H."/>
            <person name="Tanigami A."/>
            <person name="Fujiwara T."/>
            <person name="Ono T."/>
            <person name="Yamada K."/>
            <person name="Fujii Y."/>
            <person name="Ozaki K."/>
            <person name="Hirao M."/>
            <person name="Ohmori Y."/>
            <person name="Kawabata A."/>
            <person name="Hikiji T."/>
            <person name="Kobatake N."/>
            <person name="Inagaki H."/>
            <person name="Ikema Y."/>
            <person name="Okamoto S."/>
            <person name="Okitani R."/>
            <person name="Kawakami T."/>
            <person name="Noguchi S."/>
            <person name="Itoh T."/>
            <person name="Shigeta K."/>
            <person name="Senba T."/>
            <person name="Matsumura K."/>
            <person name="Nakajima Y."/>
            <person name="Mizuno T."/>
            <person name="Morinaga M."/>
            <person name="Sasaki M."/>
            <person name="Togashi T."/>
            <person name="Oyama M."/>
            <person name="Hata H."/>
            <person name="Watanabe M."/>
            <person name="Komatsu T."/>
            <person name="Mizushima-Sugano J."/>
            <person name="Satoh T."/>
            <person name="Shirai Y."/>
            <person name="Takahashi Y."/>
            <person name="Nakagawa K."/>
            <person name="Okumura K."/>
            <person name="Nagase T."/>
            <person name="Nomura N."/>
            <person name="Kikuchi H."/>
            <person name="Masuho Y."/>
            <person name="Yamashita R."/>
            <person name="Nakai K."/>
            <person name="Yada T."/>
            <person name="Nakamura Y."/>
            <person name="Ohara O."/>
            <person name="Isogai T."/>
            <person name="Sugano S."/>
        </authorList>
    </citation>
    <scope>NUCLEOTIDE SEQUENCE [LARGE SCALE MRNA] (ISOFORMS 1; 2; 3 AND 4)</scope>
    <source>
        <tissue>Cerebellum</tissue>
        <tissue>Heart</tissue>
    </source>
</reference>
<reference key="4">
    <citation type="journal article" date="2005" name="Nature">
        <title>Generation and annotation of the DNA sequences of human chromosomes 2 and 4.</title>
        <authorList>
            <person name="Hillier L.W."/>
            <person name="Graves T.A."/>
            <person name="Fulton R.S."/>
            <person name="Fulton L.A."/>
            <person name="Pepin K.H."/>
            <person name="Minx P."/>
            <person name="Wagner-McPherson C."/>
            <person name="Layman D."/>
            <person name="Wylie K."/>
            <person name="Sekhon M."/>
            <person name="Becker M.C."/>
            <person name="Fewell G.A."/>
            <person name="Delehaunty K.D."/>
            <person name="Miner T.L."/>
            <person name="Nash W.E."/>
            <person name="Kremitzki C."/>
            <person name="Oddy L."/>
            <person name="Du H."/>
            <person name="Sun H."/>
            <person name="Bradshaw-Cordum H."/>
            <person name="Ali J."/>
            <person name="Carter J."/>
            <person name="Cordes M."/>
            <person name="Harris A."/>
            <person name="Isak A."/>
            <person name="van Brunt A."/>
            <person name="Nguyen C."/>
            <person name="Du F."/>
            <person name="Courtney L."/>
            <person name="Kalicki J."/>
            <person name="Ozersky P."/>
            <person name="Abbott S."/>
            <person name="Armstrong J."/>
            <person name="Belter E.A."/>
            <person name="Caruso L."/>
            <person name="Cedroni M."/>
            <person name="Cotton M."/>
            <person name="Davidson T."/>
            <person name="Desai A."/>
            <person name="Elliott G."/>
            <person name="Erb T."/>
            <person name="Fronick C."/>
            <person name="Gaige T."/>
            <person name="Haakenson W."/>
            <person name="Haglund K."/>
            <person name="Holmes A."/>
            <person name="Harkins R."/>
            <person name="Kim K."/>
            <person name="Kruchowski S.S."/>
            <person name="Strong C.M."/>
            <person name="Grewal N."/>
            <person name="Goyea E."/>
            <person name="Hou S."/>
            <person name="Levy A."/>
            <person name="Martinka S."/>
            <person name="Mead K."/>
            <person name="McLellan M.D."/>
            <person name="Meyer R."/>
            <person name="Randall-Maher J."/>
            <person name="Tomlinson C."/>
            <person name="Dauphin-Kohlberg S."/>
            <person name="Kozlowicz-Reilly A."/>
            <person name="Shah N."/>
            <person name="Swearengen-Shahid S."/>
            <person name="Snider J."/>
            <person name="Strong J.T."/>
            <person name="Thompson J."/>
            <person name="Yoakum M."/>
            <person name="Leonard S."/>
            <person name="Pearman C."/>
            <person name="Trani L."/>
            <person name="Radionenko M."/>
            <person name="Waligorski J.E."/>
            <person name="Wang C."/>
            <person name="Rock S.M."/>
            <person name="Tin-Wollam A.-M."/>
            <person name="Maupin R."/>
            <person name="Latreille P."/>
            <person name="Wendl M.C."/>
            <person name="Yang S.-P."/>
            <person name="Pohl C."/>
            <person name="Wallis J.W."/>
            <person name="Spieth J."/>
            <person name="Bieri T.A."/>
            <person name="Berkowicz N."/>
            <person name="Nelson J.O."/>
            <person name="Osborne J."/>
            <person name="Ding L."/>
            <person name="Meyer R."/>
            <person name="Sabo A."/>
            <person name="Shotland Y."/>
            <person name="Sinha P."/>
            <person name="Wohldmann P.E."/>
            <person name="Cook L.L."/>
            <person name="Hickenbotham M.T."/>
            <person name="Eldred J."/>
            <person name="Williams D."/>
            <person name="Jones T.A."/>
            <person name="She X."/>
            <person name="Ciccarelli F.D."/>
            <person name="Izaurralde E."/>
            <person name="Taylor J."/>
            <person name="Schmutz J."/>
            <person name="Myers R.M."/>
            <person name="Cox D.R."/>
            <person name="Huang X."/>
            <person name="McPherson J.D."/>
            <person name="Mardis E.R."/>
            <person name="Clifton S.W."/>
            <person name="Warren W.C."/>
            <person name="Chinwalla A.T."/>
            <person name="Eddy S.R."/>
            <person name="Marra M.A."/>
            <person name="Ovcharenko I."/>
            <person name="Furey T.S."/>
            <person name="Miller W."/>
            <person name="Eichler E.E."/>
            <person name="Bork P."/>
            <person name="Suyama M."/>
            <person name="Torrents D."/>
            <person name="Waterston R.H."/>
            <person name="Wilson R.K."/>
        </authorList>
    </citation>
    <scope>NUCLEOTIDE SEQUENCE [LARGE SCALE GENOMIC DNA]</scope>
</reference>
<reference key="5">
    <citation type="submission" date="2005-09" db="EMBL/GenBank/DDBJ databases">
        <authorList>
            <person name="Mural R.J."/>
            <person name="Istrail S."/>
            <person name="Sutton G.G."/>
            <person name="Florea L."/>
            <person name="Halpern A.L."/>
            <person name="Mobarry C.M."/>
            <person name="Lippert R."/>
            <person name="Walenz B."/>
            <person name="Shatkay H."/>
            <person name="Dew I."/>
            <person name="Miller J.R."/>
            <person name="Flanigan M.J."/>
            <person name="Edwards N.J."/>
            <person name="Bolanos R."/>
            <person name="Fasulo D."/>
            <person name="Halldorsson B.V."/>
            <person name="Hannenhalli S."/>
            <person name="Turner R."/>
            <person name="Yooseph S."/>
            <person name="Lu F."/>
            <person name="Nusskern D.R."/>
            <person name="Shue B.C."/>
            <person name="Zheng X.H."/>
            <person name="Zhong F."/>
            <person name="Delcher A.L."/>
            <person name="Huson D.H."/>
            <person name="Kravitz S.A."/>
            <person name="Mouchard L."/>
            <person name="Reinert K."/>
            <person name="Remington K.A."/>
            <person name="Clark A.G."/>
            <person name="Waterman M.S."/>
            <person name="Eichler E.E."/>
            <person name="Adams M.D."/>
            <person name="Hunkapiller M.W."/>
            <person name="Myers E.W."/>
            <person name="Venter J.C."/>
        </authorList>
    </citation>
    <scope>NUCLEOTIDE SEQUENCE [LARGE SCALE GENOMIC DNA]</scope>
</reference>
<reference key="6">
    <citation type="journal article" date="2004" name="Genome Res.">
        <title>The status, quality, and expansion of the NIH full-length cDNA project: the Mammalian Gene Collection (MGC).</title>
        <authorList>
            <consortium name="The MGC Project Team"/>
        </authorList>
    </citation>
    <scope>NUCLEOTIDE SEQUENCE [LARGE SCALE MRNA] (ISOFORM 1)</scope>
    <source>
        <tissue>PNS</tissue>
        <tissue>Skin</tissue>
    </source>
</reference>
<reference key="7">
    <citation type="submission" date="2008-12" db="UniProtKB">
        <authorList>
            <person name="Bienvenut W.V."/>
            <person name="Glen H."/>
            <person name="Brunton V.G."/>
            <person name="Frame M.C."/>
            <person name="Boldt K."/>
            <person name="von Kriegsheim A.F."/>
            <person name="Kolch W."/>
        </authorList>
    </citation>
    <scope>PROTEIN SEQUENCE OF 1-10; 56-67; 85-123; 127-144; 178-193; 200-217; 219-230; 237-247; 293-306; 314-320; 376-397; 402-418; 431-447 AND 500-535</scope>
    <scope>ACETYLATION AT MET-1</scope>
    <scope>IDENTIFICATION BY MASS SPECTROMETRY</scope>
    <source>
        <tissue>Colon carcinoma</tissue>
        <tissue>Hepatoma</tissue>
        <tissue>Osteosarcoma</tissue>
    </source>
</reference>
<reference key="8">
    <citation type="submission" date="1997-01" db="EMBL/GenBank/DDBJ databases">
        <authorList>
            <person name="Fukushi M."/>
            <person name="Kimura T."/>
            <person name="Yamamoto N."/>
        </authorList>
    </citation>
    <scope>NUCLEOTIDE SEQUENCE [MRNA] OF 13-424 (ISOFORM 1)</scope>
</reference>
<reference key="9">
    <citation type="submission" date="2007-03" db="UniProtKB">
        <authorList>
            <person name="Lubec G."/>
            <person name="Afjehi-Sadat L."/>
        </authorList>
    </citation>
    <scope>PROTEIN SEQUENCE OF 107-123</scope>
    <scope>IDENTIFICATION BY MASS SPECTROMETRY</scope>
    <source>
        <tissue>Brain</tissue>
        <tissue>Cajal-Retzius cell</tissue>
    </source>
</reference>
<reference key="10">
    <citation type="journal article" date="2003" name="J. Biol. Chem.">
        <title>A product of the human gene adjacent to parkin is a component of Lewy bodies and suppresses Pael receptor-induced cell death.</title>
        <authorList>
            <person name="Imai Y."/>
            <person name="Soda M."/>
            <person name="Murakami T."/>
            <person name="Shoji M."/>
            <person name="Abe K."/>
            <person name="Takahashi R."/>
        </authorList>
    </citation>
    <scope>INTERACTION WITH PACRG</scope>
</reference>
<reference key="11">
    <citation type="journal article" date="2003" name="Nature">
        <title>Proteomic characterization of the human centrosome by protein correlation profiling.</title>
        <authorList>
            <person name="Andersen J.S."/>
            <person name="Wilkinson C.J."/>
            <person name="Mayor T."/>
            <person name="Mortensen P."/>
            <person name="Nigg E.A."/>
            <person name="Mann M."/>
        </authorList>
    </citation>
    <scope>IDENTIFICATION BY MASS SPECTROMETRY</scope>
    <source>
        <tissue>Lymphoblast</tissue>
    </source>
</reference>
<reference key="12">
    <citation type="journal article" date="2009" name="Anal. Chem.">
        <title>Lys-N and trypsin cover complementary parts of the phosphoproteome in a refined SCX-based approach.</title>
        <authorList>
            <person name="Gauci S."/>
            <person name="Helbig A.O."/>
            <person name="Slijper M."/>
            <person name="Krijgsveld J."/>
            <person name="Heck A.J."/>
            <person name="Mohammed S."/>
        </authorList>
    </citation>
    <scope>ACETYLATION [LARGE SCALE ANALYSIS] AT MET-1</scope>
    <scope>IDENTIFICATION BY MASS SPECTROMETRY [LARGE SCALE ANALYSIS]</scope>
</reference>
<reference key="13">
    <citation type="journal article" date="2009" name="Science">
        <title>Lysine acetylation targets protein complexes and co-regulates major cellular functions.</title>
        <authorList>
            <person name="Choudhary C."/>
            <person name="Kumar C."/>
            <person name="Gnad F."/>
            <person name="Nielsen M.L."/>
            <person name="Rehman M."/>
            <person name="Walther T.C."/>
            <person name="Olsen J.V."/>
            <person name="Mann M."/>
        </authorList>
    </citation>
    <scope>ACETYLATION [LARGE SCALE ANALYSIS] AT LYS-67 AND LYS-320</scope>
    <scope>IDENTIFICATION BY MASS SPECTROMETRY [LARGE SCALE ANALYSIS]</scope>
</reference>
<reference key="14">
    <citation type="journal article" date="2011" name="BMC Syst. Biol.">
        <title>Initial characterization of the human central proteome.</title>
        <authorList>
            <person name="Burkard T.R."/>
            <person name="Planyavsky M."/>
            <person name="Kaupe I."/>
            <person name="Breitwieser F.P."/>
            <person name="Buerckstuemmer T."/>
            <person name="Bennett K.L."/>
            <person name="Superti-Furga G."/>
            <person name="Colinge J."/>
        </authorList>
    </citation>
    <scope>IDENTIFICATION BY MASS SPECTROMETRY [LARGE SCALE ANALYSIS]</scope>
</reference>
<reference key="15">
    <citation type="journal article" date="2012" name="Mol. Cell. Proteomics">
        <title>Comparative large-scale characterisation of plant vs. mammal proteins reveals similar and idiosyncratic N-alpha acetylation features.</title>
        <authorList>
            <person name="Bienvenut W.V."/>
            <person name="Sumpton D."/>
            <person name="Martinez A."/>
            <person name="Lilla S."/>
            <person name="Espagne C."/>
            <person name="Meinnel T."/>
            <person name="Giglione C."/>
        </authorList>
    </citation>
    <scope>CLEAVAGE OF INITIATOR METHIONINE [LARGE SCALE ANALYSIS]</scope>
    <scope>IDENTIFICATION BY MASS SPECTROMETRY [LARGE SCALE ANALYSIS]</scope>
</reference>
<reference key="16">
    <citation type="journal article" date="2012" name="Proc. Natl. Acad. Sci. U.S.A.">
        <title>N-terminal acetylome analyses and functional insights of the N-terminal acetyltransferase NatB.</title>
        <authorList>
            <person name="Van Damme P."/>
            <person name="Lasa M."/>
            <person name="Polevoda B."/>
            <person name="Gazquez C."/>
            <person name="Elosegui-Artola A."/>
            <person name="Kim D.S."/>
            <person name="De Juan-Pardo E."/>
            <person name="Demeyer K."/>
            <person name="Hole K."/>
            <person name="Larrea E."/>
            <person name="Timmerman E."/>
            <person name="Prieto J."/>
            <person name="Arnesen T."/>
            <person name="Sherman F."/>
            <person name="Gevaert K."/>
            <person name="Aldabe R."/>
        </authorList>
    </citation>
    <scope>ACETYLATION [LARGE SCALE ANALYSIS] AT MET-1 (ISOFORM 3)</scope>
    <scope>IDENTIFICATION BY MASS SPECTROMETRY [LARGE SCALE ANALYSIS]</scope>
</reference>
<reference key="17">
    <citation type="journal article" date="2014" name="Cell">
        <title>Proteostatic control of telomerase function through TRiC-mediated folding of TCAB1.</title>
        <authorList>
            <person name="Freund A."/>
            <person name="Zhong F.L."/>
            <person name="Venteicher A.S."/>
            <person name="Meng Z."/>
            <person name="Veenstra T.D."/>
            <person name="Frydman J."/>
            <person name="Artandi S.E."/>
        </authorList>
    </citation>
    <scope>FUNCTION</scope>
    <scope>IDENTIFICATION IN THE CHAPERONIN-CONTAINING T-COMPLEX</scope>
</reference>
<reference key="18">
    <citation type="journal article" date="2014" name="J. Proteomics">
        <title>An enzyme assisted RP-RPLC approach for in-depth analysis of human liver phosphoproteome.</title>
        <authorList>
            <person name="Bian Y."/>
            <person name="Song C."/>
            <person name="Cheng K."/>
            <person name="Dong M."/>
            <person name="Wang F."/>
            <person name="Huang J."/>
            <person name="Sun D."/>
            <person name="Wang L."/>
            <person name="Ye M."/>
            <person name="Zou H."/>
        </authorList>
    </citation>
    <scope>IDENTIFICATION BY MASS SPECTROMETRY [LARGE SCALE ANALYSIS]</scope>
    <source>
        <tissue>Liver</tissue>
    </source>
</reference>
<reference key="19">
    <citation type="journal article" date="2014" name="Mol. Cell. Proteomics">
        <title>Immunoaffinity enrichment and mass spectrometry analysis of protein methylation.</title>
        <authorList>
            <person name="Guo A."/>
            <person name="Gu H."/>
            <person name="Zhou J."/>
            <person name="Mulhern D."/>
            <person name="Wang Y."/>
            <person name="Lee K.A."/>
            <person name="Yang V."/>
            <person name="Aguiar M."/>
            <person name="Kornhauser J."/>
            <person name="Jia X."/>
            <person name="Ren J."/>
            <person name="Beausoleil S.A."/>
            <person name="Silva J.C."/>
            <person name="Vemulapalli V."/>
            <person name="Bedford M.T."/>
            <person name="Comb M.J."/>
        </authorList>
    </citation>
    <scope>METHYLATION [LARGE SCALE ANALYSIS] AT ARG-535</scope>
    <scope>IDENTIFICATION BY MASS SPECTROMETRY [LARGE SCALE ANALYSIS]</scope>
    <source>
        <tissue>Colon carcinoma</tissue>
    </source>
</reference>
<reference key="20">
    <citation type="journal article" date="2015" name="Proteomics">
        <title>N-terminome analysis of the human mitochondrial proteome.</title>
        <authorList>
            <person name="Vaca Jacome A.S."/>
            <person name="Rabilloud T."/>
            <person name="Schaeffer-Reiss C."/>
            <person name="Rompais M."/>
            <person name="Ayoub D."/>
            <person name="Lane L."/>
            <person name="Bairoch A."/>
            <person name="Van Dorsselaer A."/>
            <person name="Carapito C."/>
        </authorList>
    </citation>
    <scope>IDENTIFICATION BY MASS SPECTROMETRY [LARGE SCALE ANALYSIS]</scope>
</reference>
<reference key="21">
    <citation type="journal article" date="2017" name="Nat. Struct. Mol. Biol.">
        <title>Site-specific mapping of the human SUMO proteome reveals co-modification with phosphorylation.</title>
        <authorList>
            <person name="Hendriks I.A."/>
            <person name="Lyon D."/>
            <person name="Young C."/>
            <person name="Jensen L.J."/>
            <person name="Vertegaal A.C."/>
            <person name="Nielsen M.L."/>
        </authorList>
    </citation>
    <scope>SUMOYLATION [LARGE SCALE ANALYSIS] AT LYS-430</scope>
    <scope>IDENTIFICATION BY MASS SPECTROMETRY [LARGE SCALE ANALYSIS]</scope>
</reference>
<reference key="22">
    <citation type="journal article" date="2020" name="Sci. Rep.">
        <title>Dlec1 is required for spermatogenesis and male fertility in mice.</title>
        <authorList>
            <person name="Okitsu Y."/>
            <person name="Nagano M."/>
            <person name="Yamagata T."/>
            <person name="Ito C."/>
            <person name="Toshimori K."/>
            <person name="Dohra H."/>
            <person name="Fujii W."/>
            <person name="Yogo K."/>
        </authorList>
    </citation>
    <scope>INTERACTION WITH DLEC1</scope>
</reference>
<reference evidence="20 21 22 23 24" key="23">
    <citation type="journal article" date="2022" name="Cell">
        <title>Structural visualization of the tubulin folding pathway directed by human chaperonin TRiC/CCT.</title>
        <authorList>
            <person name="Gestaut D."/>
            <person name="Zhao Y."/>
            <person name="Park J."/>
            <person name="Ma B."/>
            <person name="Leitner A."/>
            <person name="Collier M."/>
            <person name="Pintilie G."/>
            <person name="Roh S.H."/>
            <person name="Chiu W."/>
            <person name="Frydman J."/>
        </authorList>
    </citation>
    <scope>STRUCTURE BY ELECTRON MICROSCOPY (2.90 ANGSTROMS) IN COMPLEX WITH TUBULIN</scope>
    <scope>FUNCTION</scope>
    <scope>SUBUNIT</scope>
    <scope>ADP AND MG(2+) BINDING SITES</scope>
    <scope>CATALYTIC ACTIVITY</scope>
</reference>
<reference evidence="16 17 18 19" key="24">
    <citation type="journal article" date="2022" name="Nat. Struct. Mol. Biol.">
        <title>Snapshots of actin and tubulin folding inside the TRiC chaperonin.</title>
        <authorList>
            <person name="Kelly J.J."/>
            <person name="Tranter D."/>
            <person name="Pardon E."/>
            <person name="Chi G."/>
            <person name="Kramer H."/>
            <person name="Happonen L."/>
            <person name="Knee K.M."/>
            <person name="Janz J.M."/>
            <person name="Steyaert J."/>
            <person name="Bulawa C."/>
            <person name="Paavilainen V.O."/>
            <person name="Huiskonen J.T."/>
            <person name="Yue W.W."/>
        </authorList>
    </citation>
    <scope>STRUCTURE BY ELECTRON MICROSCOPY (2.50 ANGSTROMS) IN COMPLEX WITH TUBULIN AND IN COMPLEX WITH ACTIN</scope>
    <scope>FUNCTION</scope>
    <scope>SUBUNIT</scope>
    <scope>ADP AND MG(2+) BINDING SITES</scope>
    <scope>CATALYTIC ACTIVITY</scope>
</reference>
<reference evidence="25 26 27 28 29 30 31 32" key="25">
    <citation type="journal article" date="2023" name="Commun. Biol.">
        <title>Pathway and mechanism of tubulin folding mediated by TRiC/CCT along its ATPase cycle revealed using cryo-EM.</title>
        <authorList>
            <person name="Liu C."/>
            <person name="Jin M."/>
            <person name="Wang S."/>
            <person name="Han W."/>
            <person name="Zhao Q."/>
            <person name="Wang Y."/>
            <person name="Xu C."/>
            <person name="Diao L."/>
            <person name="Yin Y."/>
            <person name="Peng C."/>
            <person name="Peng C."/>
            <person name="Bao L."/>
            <person name="Wang Y."/>
            <person name="Cong Y."/>
        </authorList>
    </citation>
    <scope>STRUCTURE BY ELECTRON MICROSCOPY (3.10 ANGSTROMS) IN COMPLEX WITH TUBULIN</scope>
    <scope>FUNCTION</scope>
    <scope>SUBUNIT</scope>
    <scope>ATP AND ADP BINDING SITES</scope>
    <scope>CATALYTIC ACTIVITY</scope>
</reference>
<reference key="26">
    <citation type="journal article" date="2024" name="Science">
        <title>Brain malformations and seizures by impaired chaperonin function of TRiC.</title>
        <authorList>
            <person name="Kraft F."/>
            <person name="Rodriguez-Aliaga P."/>
            <person name="Yuan W."/>
            <person name="Franken L."/>
            <person name="Zajt K."/>
            <person name="Hasan D."/>
            <person name="Lee T.T."/>
            <person name="Flex E."/>
            <person name="Hentschel A."/>
            <person name="Innes A.M."/>
            <person name="Zheng B."/>
            <person name="Julia Suh D.S."/>
            <person name="Knopp C."/>
            <person name="Lausberg E."/>
            <person name="Krause J."/>
            <person name="Zhang X."/>
            <person name="Trapane P."/>
            <person name="Carroll R."/>
            <person name="McClatchey M."/>
            <person name="Fry A.E."/>
            <person name="Wang L."/>
            <person name="Giesselmann S."/>
            <person name="Hoang H."/>
            <person name="Baldridge D."/>
            <person name="Silverman G.A."/>
            <person name="Radio F.C."/>
            <person name="Bertini E."/>
            <person name="Ciolfi A."/>
            <person name="Blood K.A."/>
            <person name="de Sainte Agathe J.M."/>
            <person name="Charles P."/>
            <person name="Bergant G."/>
            <person name="Cuturilo G."/>
            <person name="Peterlin B."/>
            <person name="Diderich K."/>
            <person name="Streff H."/>
            <person name="Robak L."/>
            <person name="Oegema R."/>
            <person name="van Binsbergen E."/>
            <person name="Herriges J."/>
            <person name="Saunders C.J."/>
            <person name="Maier A."/>
            <person name="Wolking S."/>
            <person name="Weber Y."/>
            <person name="Lochmueller H."/>
            <person name="Meyer S."/>
            <person name="Aleman A."/>
            <person name="Polavarapu K."/>
            <person name="Nicolas G."/>
            <person name="Goldenberg A."/>
            <person name="Guyant L."/>
            <person name="Pope K."/>
            <person name="Hehmeyer K.N."/>
            <person name="Monaghan K.G."/>
            <person name="Quade A."/>
            <person name="Smol T."/>
            <person name="Caumes R."/>
            <person name="Duerinckx S."/>
            <person name="Depondt C."/>
            <person name="Van Paesschen W."/>
            <person name="Rieubland C."/>
            <person name="Poloni C."/>
            <person name="Guipponi M."/>
            <person name="Arcioni S."/>
            <person name="Meuwissen M."/>
            <person name="Jansen A.C."/>
            <person name="Rosenblum J."/>
            <person name="Haack T.B."/>
            <person name="Bertrand M."/>
            <person name="Gerstner L."/>
            <person name="Magg J."/>
            <person name="Riess O."/>
            <person name="Schulz J.B."/>
            <person name="Wagner N."/>
            <person name="Wiesmann M."/>
            <person name="Weis J."/>
            <person name="Eggermann T."/>
            <person name="Begemann M."/>
            <person name="Roos A."/>
            <person name="Haeusler M."/>
            <person name="Schedl T."/>
            <person name="Tartaglia M."/>
            <person name="Bremer J."/>
            <person name="Pak S.C."/>
            <person name="Frydman J."/>
            <person name="Elbracht M."/>
            <person name="Kurth I."/>
        </authorList>
    </citation>
    <scope>INVOLVEMENT IN BRAIN DEVELOPMENTAL DISORDERS</scope>
    <scope>VARIANT LYS-379</scope>
</reference>
<protein>
    <recommendedName>
        <fullName>T-complex protein 1 subunit eta</fullName>
        <shortName>TCP-1-eta</shortName>
        <ecNumber evidence="13 14 15">3.6.1.-</ecNumber>
    </recommendedName>
    <alternativeName>
        <fullName>CCT-eta</fullName>
    </alternativeName>
    <alternativeName>
        <fullName>Chaperonin containing T-complex polypeptide 1 subunit 7</fullName>
    </alternativeName>
    <alternativeName>
        <fullName>HIV-1 Nef-interacting protein</fullName>
    </alternativeName>
    <component>
        <recommendedName>
            <fullName>T-complex protein 1 subunit eta, N-terminally processed</fullName>
        </recommendedName>
    </component>
</protein>
<proteinExistence type="evidence at protein level"/>
<sequence>MMPTPVILLKEGTDSSQGIPQLVSNISACQVIAEAVRTTLGPRGMDKLIVDGRGKATISNDGATILKLLDVVHPAAKTLVDIAKSQDAEVGDGTTSVTLLAAEFLKQVKPYVEEGLHPQIIIRAFRTATQLAVNKIKEIAVTVKKADKVEQRKLLEKCAMTALSSKLISQQKAFFAKMVVDAVMMLDDLLQLKMIGIKKVQGGALEDSQLVAGVAFKKTFSYAGFEMQPKKYHNPKIALLNVELELKAEKDNAEIRVHTVEDYQAIVDAEWNILYDKLEKIHHSGAKVVLSKLPIGDVATQYFADRDMFCAGRVPEEDLKRTMMACGGSIQTSVNALSADVLGRCQVFEETQIGGERYNFFTGCPKAKTCTFILRGGAEQFMEETERSLHDAIMIVRRAIKNDSVVAGGGAIEMELSKYLRDYSRTIPGKQQLLIGAYAKALEIIPRQLCDNAGFDATNILNKLRARHAQGGTWYGVDINNEDIADNFEAFVWEPAMVRINALTAASEAACLIVSVDETIKNPRSTVDAPTAAGRGRGRGRPH</sequence>
<feature type="chain" id="PRO_0000128365" description="T-complex protein 1 subunit eta">
    <location>
        <begin position="1"/>
        <end position="543"/>
    </location>
</feature>
<feature type="initiator methionine" description="Removed; alternate" evidence="35">
    <location>
        <position position="1"/>
    </location>
</feature>
<feature type="chain" id="PRO_0000434391" description="T-complex protein 1 subunit eta, N-terminally processed">
    <location>
        <begin position="2"/>
        <end position="543"/>
    </location>
</feature>
<feature type="region of interest" description="Disordered" evidence="2">
    <location>
        <begin position="524"/>
        <end position="543"/>
    </location>
</feature>
<feature type="binding site" evidence="6 7 16 17 18 19 20 22">
    <location>
        <position position="41"/>
    </location>
    <ligand>
        <name>ADP</name>
        <dbReference type="ChEBI" id="CHEBI:456216"/>
    </ligand>
</feature>
<feature type="binding site" evidence="8 29">
    <location>
        <position position="41"/>
    </location>
    <ligand>
        <name>ATP</name>
        <dbReference type="ChEBI" id="CHEBI:30616"/>
    </ligand>
</feature>
<feature type="binding site" evidence="6 7 16 17 18 19 20 21 22 23">
    <location>
        <position position="92"/>
    </location>
    <ligand>
        <name>Mg(2+)</name>
        <dbReference type="ChEBI" id="CHEBI:18420"/>
    </ligand>
</feature>
<feature type="binding site" evidence="6 7 8 16 17 18 19 20 21 23 30">
    <location>
        <position position="93"/>
    </location>
    <ligand>
        <name>ADP</name>
        <dbReference type="ChEBI" id="CHEBI:456216"/>
    </ligand>
</feature>
<feature type="binding site" evidence="8 29">
    <location>
        <position position="93"/>
    </location>
    <ligand>
        <name>ATP</name>
        <dbReference type="ChEBI" id="CHEBI:30616"/>
    </ligand>
</feature>
<feature type="binding site" evidence="6 7 8 16 17 20 21 27 28">
    <location>
        <position position="94"/>
    </location>
    <ligand>
        <name>ADP</name>
        <dbReference type="ChEBI" id="CHEBI:456216"/>
    </ligand>
</feature>
<feature type="binding site" evidence="6 7 8 17 18 20 21 22 23 27 28 30">
    <location>
        <position position="95"/>
    </location>
    <ligand>
        <name>ADP</name>
        <dbReference type="ChEBI" id="CHEBI:456216"/>
    </ligand>
</feature>
<feature type="binding site" evidence="6 7 8 16 17 18 20 22 23 27 28 30">
    <location>
        <position position="96"/>
    </location>
    <ligand>
        <name>ADP</name>
        <dbReference type="ChEBI" id="CHEBI:456216"/>
    </ligand>
</feature>
<feature type="binding site" evidence="8 29">
    <location>
        <position position="96"/>
    </location>
    <ligand>
        <name>ATP</name>
        <dbReference type="ChEBI" id="CHEBI:30616"/>
    </ligand>
</feature>
<feature type="binding site" evidence="6 7 8 17 18 20 22 23 27 28">
    <location>
        <position position="164"/>
    </location>
    <ligand>
        <name>ADP</name>
        <dbReference type="ChEBI" id="CHEBI:456216"/>
    </ligand>
</feature>
<feature type="binding site" evidence="6 7 16 17 18 20 21 23">
    <location>
        <position position="165"/>
    </location>
    <ligand>
        <name>ADP</name>
        <dbReference type="ChEBI" id="CHEBI:456216"/>
    </ligand>
</feature>
<feature type="binding site" evidence="8 29">
    <location>
        <position position="398"/>
    </location>
    <ligand>
        <name>ATP</name>
        <dbReference type="ChEBI" id="CHEBI:30616"/>
    </ligand>
</feature>
<feature type="binding site" evidence="6 7 8 16 17 18 19 20 21 22 23 27 28 30">
    <location>
        <position position="409"/>
    </location>
    <ligand>
        <name>ADP</name>
        <dbReference type="ChEBI" id="CHEBI:456216"/>
    </ligand>
</feature>
<feature type="binding site" evidence="8 29">
    <location>
        <position position="409"/>
    </location>
    <ligand>
        <name>ATP</name>
        <dbReference type="ChEBI" id="CHEBI:30616"/>
    </ligand>
</feature>
<feature type="binding site" evidence="6 18 19">
    <location>
        <position position="494"/>
    </location>
    <ligand>
        <name>ADP</name>
        <dbReference type="ChEBI" id="CHEBI:456216"/>
    </ligand>
</feature>
<feature type="binding site" evidence="6 7 8 17 18 20 21 22 27 28">
    <location>
        <position position="499"/>
    </location>
    <ligand>
        <name>ADP</name>
        <dbReference type="ChEBI" id="CHEBI:456216"/>
    </ligand>
</feature>
<feature type="binding site" evidence="8 29">
    <location>
        <position position="499"/>
    </location>
    <ligand>
        <name>ATP</name>
        <dbReference type="ChEBI" id="CHEBI:30616"/>
    </ligand>
</feature>
<feature type="modified residue" description="N-acetylmethionine" evidence="10 33">
    <location>
        <position position="1"/>
    </location>
</feature>
<feature type="modified residue" description="N6-acetyllysine" evidence="34">
    <location>
        <position position="67"/>
    </location>
</feature>
<feature type="modified residue" description="N6-acetyllysine" evidence="1">
    <location>
        <position position="250"/>
    </location>
</feature>
<feature type="modified residue" description="N6-acetyllysine" evidence="34">
    <location>
        <position position="320"/>
    </location>
</feature>
<feature type="modified residue" description="Omega-N-methylarginine" evidence="37">
    <location>
        <position position="535"/>
    </location>
</feature>
<feature type="cross-link" description="Glycyl lysine isopeptide (Lys-Gly) (interchain with G-Cter in SUMO2)" evidence="38">
    <location>
        <position position="430"/>
    </location>
</feature>
<feature type="splice variant" id="VSP_043572" description="In isoform 3." evidence="11">
    <location>
        <begin position="1"/>
        <end position="44"/>
    </location>
</feature>
<feature type="splice variant" id="VSP_043573" description="In isoform 2 and isoform 4." evidence="11">
    <location>
        <begin position="3"/>
        <end position="89"/>
    </location>
</feature>
<feature type="splice variant" id="VSP_043574" description="In isoform 2." evidence="11">
    <location>
        <begin position="90"/>
        <end position="206"/>
    </location>
</feature>
<feature type="sequence variant" id="VAR_052269" description="In dbSNP:rs2231427.">
    <original>T</original>
    <variation>A</variation>
    <location>
        <position position="259"/>
    </location>
</feature>
<feature type="sequence variant" id="VAR_090332" description="Found in a patient with developmental delay, intellectual disability, pyramidal and cerebellar signs, cerebellar vermis hypoplasia and hypoplasia of the corpus callosum; uncertain significance." evidence="9">
    <original>E</original>
    <variation>K</variation>
    <location>
        <position position="379"/>
    </location>
</feature>
<feature type="sequence conflict" description="In Ref. 8; AAB41437." evidence="12" ref="8">
    <original>HH</original>
    <variation>RQ</variation>
    <location>
        <begin position="282"/>
        <end position="283"/>
    </location>
</feature>
<feature type="sequence conflict" description="In Ref. 8; AAB41437." evidence="12" ref="8">
    <original>L</original>
    <variation>P</variation>
    <location>
        <position position="293"/>
    </location>
</feature>
<feature type="sequence conflict" description="In Ref. 8; AAB41437." evidence="12" ref="8">
    <original>A</original>
    <variation>P</variation>
    <location>
        <position position="336"/>
    </location>
</feature>
<feature type="sequence conflict" description="In Ref. 8; AAB41437." evidence="12" ref="8">
    <original>C</original>
    <variation>L</variation>
    <location>
        <position position="364"/>
    </location>
</feature>
<feature type="sequence conflict" description="In Ref. 8; AAB41437." evidence="12" ref="8">
    <original>LRG</original>
    <variation>SPC</variation>
    <location>
        <begin position="374"/>
        <end position="376"/>
    </location>
</feature>
<feature type="sequence conflict" description="In Ref. 8; AAB41437." evidence="12" ref="8">
    <original>A</original>
    <variation>P</variation>
    <location>
        <position position="407"/>
    </location>
</feature>
<feature type="sequence conflict" description="In Ref. 8; AAB41437." evidence="12" ref="8">
    <original>A</original>
    <variation>P</variation>
    <location>
        <position position="411"/>
    </location>
</feature>
<feature type="strand" evidence="42">
    <location>
        <begin position="9"/>
        <end position="12"/>
    </location>
</feature>
<feature type="strand" evidence="39">
    <location>
        <begin position="14"/>
        <end position="18"/>
    </location>
</feature>
<feature type="helix" evidence="39">
    <location>
        <begin position="19"/>
        <end position="37"/>
    </location>
</feature>
<feature type="strand" evidence="40">
    <location>
        <begin position="41"/>
        <end position="43"/>
    </location>
</feature>
<feature type="strand" evidence="39">
    <location>
        <begin position="46"/>
        <end position="50"/>
    </location>
</feature>
<feature type="strand" evidence="47">
    <location>
        <begin position="52"/>
        <end position="54"/>
    </location>
</feature>
<feature type="strand" evidence="39">
    <location>
        <begin position="56"/>
        <end position="59"/>
    </location>
</feature>
<feature type="helix" evidence="39">
    <location>
        <begin position="62"/>
        <end position="68"/>
    </location>
</feature>
<feature type="turn" evidence="39">
    <location>
        <begin position="74"/>
        <end position="76"/>
    </location>
</feature>
<feature type="helix" evidence="39">
    <location>
        <begin position="77"/>
        <end position="89"/>
    </location>
</feature>
<feature type="helix" evidence="39">
    <location>
        <begin position="94"/>
        <end position="113"/>
    </location>
</feature>
<feature type="helix" evidence="39">
    <location>
        <begin position="118"/>
        <end position="139"/>
    </location>
</feature>
<feature type="strand" evidence="44">
    <location>
        <begin position="140"/>
        <end position="142"/>
    </location>
</feature>
<feature type="helix" evidence="39">
    <location>
        <begin position="148"/>
        <end position="163"/>
    </location>
</feature>
<feature type="helix" evidence="39">
    <location>
        <begin position="169"/>
        <end position="171"/>
    </location>
</feature>
<feature type="helix" evidence="39">
    <location>
        <begin position="172"/>
        <end position="184"/>
    </location>
</feature>
<feature type="turn" evidence="41">
    <location>
        <begin position="187"/>
        <end position="189"/>
    </location>
</feature>
<feature type="helix" evidence="39">
    <location>
        <begin position="192"/>
        <end position="194"/>
    </location>
</feature>
<feature type="strand" evidence="39">
    <location>
        <begin position="195"/>
        <end position="203"/>
    </location>
</feature>
<feature type="turn" evidence="39">
    <location>
        <begin position="205"/>
        <end position="207"/>
    </location>
</feature>
<feature type="strand" evidence="39">
    <location>
        <begin position="209"/>
        <end position="217"/>
    </location>
</feature>
<feature type="turn" evidence="45">
    <location>
        <begin position="220"/>
        <end position="222"/>
    </location>
</feature>
<feature type="turn" evidence="39">
    <location>
        <begin position="223"/>
        <end position="227"/>
    </location>
</feature>
<feature type="strand" evidence="39">
    <location>
        <begin position="231"/>
        <end position="234"/>
    </location>
</feature>
<feature type="strand" evidence="39">
    <location>
        <begin position="236"/>
        <end position="240"/>
    </location>
</feature>
<feature type="strand" evidence="39">
    <location>
        <begin position="244"/>
        <end position="246"/>
    </location>
</feature>
<feature type="strand" evidence="46">
    <location>
        <begin position="249"/>
        <end position="252"/>
    </location>
</feature>
<feature type="strand" evidence="39">
    <location>
        <begin position="253"/>
        <end position="259"/>
    </location>
</feature>
<feature type="helix" evidence="39">
    <location>
        <begin position="260"/>
        <end position="283"/>
    </location>
</feature>
<feature type="strand" evidence="39">
    <location>
        <begin position="287"/>
        <end position="293"/>
    </location>
</feature>
<feature type="helix" evidence="39">
    <location>
        <begin position="297"/>
        <end position="305"/>
    </location>
</feature>
<feature type="strand" evidence="39">
    <location>
        <begin position="309"/>
        <end position="311"/>
    </location>
</feature>
<feature type="helix" evidence="39">
    <location>
        <begin position="316"/>
        <end position="326"/>
    </location>
</feature>
<feature type="strand" evidence="39">
    <location>
        <begin position="330"/>
        <end position="332"/>
    </location>
</feature>
<feature type="helix" evidence="43">
    <location>
        <begin position="334"/>
        <end position="336"/>
    </location>
</feature>
<feature type="turn" evidence="39">
    <location>
        <begin position="339"/>
        <end position="341"/>
    </location>
</feature>
<feature type="strand" evidence="39">
    <location>
        <begin position="342"/>
        <end position="344"/>
    </location>
</feature>
<feature type="strand" evidence="39">
    <location>
        <begin position="346"/>
        <end position="353"/>
    </location>
</feature>
<feature type="strand" evidence="39">
    <location>
        <begin position="356"/>
        <end position="362"/>
    </location>
</feature>
<feature type="strand" evidence="39">
    <location>
        <begin position="370"/>
        <end position="378"/>
    </location>
</feature>
<feature type="helix" evidence="39">
    <location>
        <begin position="379"/>
        <end position="401"/>
    </location>
</feature>
<feature type="strand" evidence="39">
    <location>
        <begin position="405"/>
        <end position="407"/>
    </location>
</feature>
<feature type="turn" evidence="39">
    <location>
        <begin position="408"/>
        <end position="410"/>
    </location>
</feature>
<feature type="helix" evidence="39">
    <location>
        <begin position="411"/>
        <end position="424"/>
    </location>
</feature>
<feature type="helix" evidence="39">
    <location>
        <begin position="430"/>
        <end position="442"/>
    </location>
</feature>
<feature type="helix" evidence="39">
    <location>
        <begin position="444"/>
        <end position="453"/>
    </location>
</feature>
<feature type="helix" evidence="39">
    <location>
        <begin position="457"/>
        <end position="469"/>
    </location>
</feature>
<feature type="strand" evidence="39">
    <location>
        <begin position="473"/>
        <end position="478"/>
    </location>
</feature>
<feature type="turn" evidence="39">
    <location>
        <begin position="479"/>
        <end position="482"/>
    </location>
</feature>
<feature type="strand" evidence="39">
    <location>
        <begin position="483"/>
        <end position="486"/>
    </location>
</feature>
<feature type="turn" evidence="39">
    <location>
        <begin position="487"/>
        <end position="491"/>
    </location>
</feature>
<feature type="strand" evidence="39">
    <location>
        <begin position="493"/>
        <end position="495"/>
    </location>
</feature>
<feature type="helix" evidence="39">
    <location>
        <begin position="496"/>
        <end position="515"/>
    </location>
</feature>
<feature type="strand" evidence="39">
    <location>
        <begin position="516"/>
        <end position="521"/>
    </location>
</feature>
<feature type="modified residue" description="N-acetylmethionine" evidence="36">
    <location sequence="Q99832-3">
        <position position="1"/>
    </location>
</feature>
<organism>
    <name type="scientific">Homo sapiens</name>
    <name type="common">Human</name>
    <dbReference type="NCBI Taxonomy" id="9606"/>
    <lineage>
        <taxon>Eukaryota</taxon>
        <taxon>Metazoa</taxon>
        <taxon>Chordata</taxon>
        <taxon>Craniata</taxon>
        <taxon>Vertebrata</taxon>
        <taxon>Euteleostomi</taxon>
        <taxon>Mammalia</taxon>
        <taxon>Eutheria</taxon>
        <taxon>Euarchontoglires</taxon>
        <taxon>Primates</taxon>
        <taxon>Haplorrhini</taxon>
        <taxon>Catarrhini</taxon>
        <taxon>Hominidae</taxon>
        <taxon>Homo</taxon>
    </lineage>
</organism>
<evidence type="ECO:0000250" key="1">
    <source>
        <dbReference type="UniProtKB" id="P80313"/>
    </source>
</evidence>
<evidence type="ECO:0000256" key="2">
    <source>
        <dbReference type="SAM" id="MobiDB-lite"/>
    </source>
</evidence>
<evidence type="ECO:0000269" key="3">
    <source>
    </source>
</evidence>
<evidence type="ECO:0000269" key="4">
    <source>
    </source>
</evidence>
<evidence type="ECO:0000269" key="5">
    <source>
    </source>
</evidence>
<evidence type="ECO:0000269" key="6">
    <source>
    </source>
</evidence>
<evidence type="ECO:0000269" key="7">
    <source>
    </source>
</evidence>
<evidence type="ECO:0000269" key="8">
    <source>
    </source>
</evidence>
<evidence type="ECO:0000269" key="9">
    <source>
    </source>
</evidence>
<evidence type="ECO:0000269" key="10">
    <source ref="7"/>
</evidence>
<evidence type="ECO:0000303" key="11">
    <source>
    </source>
</evidence>
<evidence type="ECO:0000305" key="12"/>
<evidence type="ECO:0000305" key="13">
    <source>
    </source>
</evidence>
<evidence type="ECO:0000305" key="14">
    <source>
    </source>
</evidence>
<evidence type="ECO:0000305" key="15">
    <source>
    </source>
</evidence>
<evidence type="ECO:0007744" key="16">
    <source>
        <dbReference type="PDB" id="7NVL"/>
    </source>
</evidence>
<evidence type="ECO:0007744" key="17">
    <source>
        <dbReference type="PDB" id="7NVM"/>
    </source>
</evidence>
<evidence type="ECO:0007744" key="18">
    <source>
        <dbReference type="PDB" id="7NVN"/>
    </source>
</evidence>
<evidence type="ECO:0007744" key="19">
    <source>
        <dbReference type="PDB" id="7NVO"/>
    </source>
</evidence>
<evidence type="ECO:0007744" key="20">
    <source>
        <dbReference type="PDB" id="7TRG"/>
    </source>
</evidence>
<evidence type="ECO:0007744" key="21">
    <source>
        <dbReference type="PDB" id="7TTN"/>
    </source>
</evidence>
<evidence type="ECO:0007744" key="22">
    <source>
        <dbReference type="PDB" id="7TTT"/>
    </source>
</evidence>
<evidence type="ECO:0007744" key="23">
    <source>
        <dbReference type="PDB" id="7TUB"/>
    </source>
</evidence>
<evidence type="ECO:0007744" key="24">
    <source>
        <dbReference type="PDB" id="7WU7"/>
    </source>
</evidence>
<evidence type="ECO:0007744" key="25">
    <source>
        <dbReference type="PDB" id="7WZ3"/>
    </source>
</evidence>
<evidence type="ECO:0007744" key="26">
    <source>
        <dbReference type="PDB" id="7X0A"/>
    </source>
</evidence>
<evidence type="ECO:0007744" key="27">
    <source>
        <dbReference type="PDB" id="7X0S"/>
    </source>
</evidence>
<evidence type="ECO:0007744" key="28">
    <source>
        <dbReference type="PDB" id="7X0V"/>
    </source>
</evidence>
<evidence type="ECO:0007744" key="29">
    <source>
        <dbReference type="PDB" id="7X3J"/>
    </source>
</evidence>
<evidence type="ECO:0007744" key="30">
    <source>
        <dbReference type="PDB" id="7X3U"/>
    </source>
</evidence>
<evidence type="ECO:0007744" key="31">
    <source>
        <dbReference type="PDB" id="7X6Q"/>
    </source>
</evidence>
<evidence type="ECO:0007744" key="32">
    <source>
        <dbReference type="PDB" id="7X7Y"/>
    </source>
</evidence>
<evidence type="ECO:0007744" key="33">
    <source>
    </source>
</evidence>
<evidence type="ECO:0007744" key="34">
    <source>
    </source>
</evidence>
<evidence type="ECO:0007744" key="35">
    <source>
    </source>
</evidence>
<evidence type="ECO:0007744" key="36">
    <source>
    </source>
</evidence>
<evidence type="ECO:0007744" key="37">
    <source>
    </source>
</evidence>
<evidence type="ECO:0007744" key="38">
    <source>
    </source>
</evidence>
<evidence type="ECO:0007829" key="39">
    <source>
        <dbReference type="PDB" id="7NVL"/>
    </source>
</evidence>
<evidence type="ECO:0007829" key="40">
    <source>
        <dbReference type="PDB" id="7NVO"/>
    </source>
</evidence>
<evidence type="ECO:0007829" key="41">
    <source>
        <dbReference type="PDB" id="7TTT"/>
    </source>
</evidence>
<evidence type="ECO:0007829" key="42">
    <source>
        <dbReference type="PDB" id="7X0A"/>
    </source>
</evidence>
<evidence type="ECO:0007829" key="43">
    <source>
        <dbReference type="PDB" id="7X0S"/>
    </source>
</evidence>
<evidence type="ECO:0007829" key="44">
    <source>
        <dbReference type="PDB" id="8I1U"/>
    </source>
</evidence>
<evidence type="ECO:0007829" key="45">
    <source>
        <dbReference type="PDB" id="8SFE"/>
    </source>
</evidence>
<evidence type="ECO:0007829" key="46">
    <source>
        <dbReference type="PDB" id="8SG8"/>
    </source>
</evidence>
<evidence type="ECO:0007829" key="47">
    <source>
        <dbReference type="PDB" id="8SH9"/>
    </source>
</evidence>